<name>MGSA_CLOP1</name>
<dbReference type="EC" id="4.2.3.3" evidence="1"/>
<dbReference type="EMBL" id="CP000246">
    <property type="protein sequence ID" value="ABG82973.1"/>
    <property type="molecule type" value="Genomic_DNA"/>
</dbReference>
<dbReference type="RefSeq" id="WP_003476019.1">
    <property type="nucleotide sequence ID" value="NC_008261.1"/>
</dbReference>
<dbReference type="SMR" id="Q0TRM9"/>
<dbReference type="STRING" id="195103.CPF_1265"/>
<dbReference type="PaxDb" id="195103-CPF_1265"/>
<dbReference type="KEGG" id="cpf:CPF_1265"/>
<dbReference type="eggNOG" id="COG1803">
    <property type="taxonomic scope" value="Bacteria"/>
</dbReference>
<dbReference type="HOGENOM" id="CLU_120420_1_0_9"/>
<dbReference type="Proteomes" id="UP000001823">
    <property type="component" value="Chromosome"/>
</dbReference>
<dbReference type="GO" id="GO:0005829">
    <property type="term" value="C:cytosol"/>
    <property type="evidence" value="ECO:0007669"/>
    <property type="project" value="TreeGrafter"/>
</dbReference>
<dbReference type="GO" id="GO:0008929">
    <property type="term" value="F:methylglyoxal synthase activity"/>
    <property type="evidence" value="ECO:0007669"/>
    <property type="project" value="UniProtKB-UniRule"/>
</dbReference>
<dbReference type="GO" id="GO:0019242">
    <property type="term" value="P:methylglyoxal biosynthetic process"/>
    <property type="evidence" value="ECO:0007669"/>
    <property type="project" value="UniProtKB-UniRule"/>
</dbReference>
<dbReference type="CDD" id="cd01422">
    <property type="entry name" value="MGS"/>
    <property type="match status" value="1"/>
</dbReference>
<dbReference type="Gene3D" id="3.40.50.1380">
    <property type="entry name" value="Methylglyoxal synthase-like domain"/>
    <property type="match status" value="1"/>
</dbReference>
<dbReference type="HAMAP" id="MF_00549">
    <property type="entry name" value="Methylglyoxal_synth"/>
    <property type="match status" value="1"/>
</dbReference>
<dbReference type="InterPro" id="IPR004363">
    <property type="entry name" value="Methylgl_synth"/>
</dbReference>
<dbReference type="InterPro" id="IPR018148">
    <property type="entry name" value="Methylglyoxal_synth_AS"/>
</dbReference>
<dbReference type="InterPro" id="IPR011607">
    <property type="entry name" value="MGS-like_dom"/>
</dbReference>
<dbReference type="InterPro" id="IPR036914">
    <property type="entry name" value="MGS-like_dom_sf"/>
</dbReference>
<dbReference type="NCBIfam" id="TIGR00160">
    <property type="entry name" value="MGSA"/>
    <property type="match status" value="1"/>
</dbReference>
<dbReference type="NCBIfam" id="NF003559">
    <property type="entry name" value="PRK05234.1"/>
    <property type="match status" value="1"/>
</dbReference>
<dbReference type="PANTHER" id="PTHR30492">
    <property type="entry name" value="METHYLGLYOXAL SYNTHASE"/>
    <property type="match status" value="1"/>
</dbReference>
<dbReference type="PANTHER" id="PTHR30492:SF0">
    <property type="entry name" value="METHYLGLYOXAL SYNTHASE"/>
    <property type="match status" value="1"/>
</dbReference>
<dbReference type="Pfam" id="PF02142">
    <property type="entry name" value="MGS"/>
    <property type="match status" value="1"/>
</dbReference>
<dbReference type="PIRSF" id="PIRSF006614">
    <property type="entry name" value="Methylglyox_syn"/>
    <property type="match status" value="1"/>
</dbReference>
<dbReference type="SMART" id="SM00851">
    <property type="entry name" value="MGS"/>
    <property type="match status" value="1"/>
</dbReference>
<dbReference type="SUPFAM" id="SSF52335">
    <property type="entry name" value="Methylglyoxal synthase-like"/>
    <property type="match status" value="1"/>
</dbReference>
<dbReference type="PROSITE" id="PS01335">
    <property type="entry name" value="METHYLGLYOXAL_SYNTH"/>
    <property type="match status" value="1"/>
</dbReference>
<dbReference type="PROSITE" id="PS51855">
    <property type="entry name" value="MGS"/>
    <property type="match status" value="1"/>
</dbReference>
<protein>
    <recommendedName>
        <fullName evidence="1">Methylglyoxal synthase</fullName>
        <shortName evidence="1">MGS</shortName>
        <ecNumber evidence="1">4.2.3.3</ecNumber>
    </recommendedName>
</protein>
<evidence type="ECO:0000255" key="1">
    <source>
        <dbReference type="HAMAP-Rule" id="MF_00549"/>
    </source>
</evidence>
<proteinExistence type="inferred from homology"/>
<feature type="chain" id="PRO_1000017805" description="Methylglyoxal synthase">
    <location>
        <begin position="1"/>
        <end position="119"/>
    </location>
</feature>
<feature type="domain" description="MGS-like" evidence="1">
    <location>
        <begin position="1"/>
        <end position="119"/>
    </location>
</feature>
<feature type="active site" description="Proton donor/acceptor" evidence="1">
    <location>
        <position position="60"/>
    </location>
</feature>
<feature type="binding site" evidence="1">
    <location>
        <position position="8"/>
    </location>
    <ligand>
        <name>substrate</name>
    </ligand>
</feature>
<feature type="binding site" evidence="1">
    <location>
        <position position="12"/>
    </location>
    <ligand>
        <name>substrate</name>
    </ligand>
</feature>
<feature type="binding site" evidence="1">
    <location>
        <begin position="34"/>
        <end position="37"/>
    </location>
    <ligand>
        <name>substrate</name>
    </ligand>
</feature>
<feature type="binding site" evidence="1">
    <location>
        <begin position="54"/>
        <end position="55"/>
    </location>
    <ligand>
        <name>substrate</name>
    </ligand>
</feature>
<feature type="binding site" evidence="1">
    <location>
        <position position="87"/>
    </location>
    <ligand>
        <name>substrate</name>
    </ligand>
</feature>
<comment type="function">
    <text evidence="1">Catalyzes the formation of methylglyoxal from dihydroxyacetone phosphate.</text>
</comment>
<comment type="catalytic activity">
    <reaction evidence="1">
        <text>dihydroxyacetone phosphate = methylglyoxal + phosphate</text>
        <dbReference type="Rhea" id="RHEA:17937"/>
        <dbReference type="ChEBI" id="CHEBI:17158"/>
        <dbReference type="ChEBI" id="CHEBI:43474"/>
        <dbReference type="ChEBI" id="CHEBI:57642"/>
        <dbReference type="EC" id="4.2.3.3"/>
    </reaction>
</comment>
<comment type="similarity">
    <text evidence="1">Belongs to the methylglyoxal synthase family.</text>
</comment>
<organism>
    <name type="scientific">Clostridium perfringens (strain ATCC 13124 / DSM 756 / JCM 1290 / NCIMB 6125 / NCTC 8237 / Type A)</name>
    <dbReference type="NCBI Taxonomy" id="195103"/>
    <lineage>
        <taxon>Bacteria</taxon>
        <taxon>Bacillati</taxon>
        <taxon>Bacillota</taxon>
        <taxon>Clostridia</taxon>
        <taxon>Eubacteriales</taxon>
        <taxon>Clostridiaceae</taxon>
        <taxon>Clostridium</taxon>
    </lineage>
</organism>
<keyword id="KW-0456">Lyase</keyword>
<reference key="1">
    <citation type="journal article" date="2006" name="Genome Res.">
        <title>Skewed genomic variability in strains of the toxigenic bacterial pathogen, Clostridium perfringens.</title>
        <authorList>
            <person name="Myers G.S.A."/>
            <person name="Rasko D.A."/>
            <person name="Cheung J.K."/>
            <person name="Ravel J."/>
            <person name="Seshadri R."/>
            <person name="DeBoy R.T."/>
            <person name="Ren Q."/>
            <person name="Varga J."/>
            <person name="Awad M.M."/>
            <person name="Brinkac L.M."/>
            <person name="Daugherty S.C."/>
            <person name="Haft D.H."/>
            <person name="Dodson R.J."/>
            <person name="Madupu R."/>
            <person name="Nelson W.C."/>
            <person name="Rosovitz M.J."/>
            <person name="Sullivan S.A."/>
            <person name="Khouri H."/>
            <person name="Dimitrov G.I."/>
            <person name="Watkins K.L."/>
            <person name="Mulligan S."/>
            <person name="Benton J."/>
            <person name="Radune D."/>
            <person name="Fisher D.J."/>
            <person name="Atkins H.S."/>
            <person name="Hiscox T."/>
            <person name="Jost B.H."/>
            <person name="Billington S.J."/>
            <person name="Songer J.G."/>
            <person name="McClane B.A."/>
            <person name="Titball R.W."/>
            <person name="Rood J.I."/>
            <person name="Melville S.B."/>
            <person name="Paulsen I.T."/>
        </authorList>
    </citation>
    <scope>NUCLEOTIDE SEQUENCE [LARGE SCALE GENOMIC DNA]</scope>
    <source>
        <strain>ATCC 13124 / DSM 756 / JCM 1290 / NCIMB 6125 / NCTC 8237 / S 107 / Type A</strain>
    </source>
</reference>
<accession>Q0TRM9</accession>
<sequence length="119" mass="13069">MKIALIAHDKKKEEMIELAKDFEDKLSKHILVATGTTGLKVMQNTSLDVKRCKSGPLGGDQEIGAMVANHDVDMVIFLRDPLTAQPHEPDISALLRLCDVYKVPLATNTESAKLIMADI</sequence>
<gene>
    <name evidence="1" type="primary">mgsA</name>
    <name type="ordered locus">CPF_1265</name>
</gene>